<protein>
    <recommendedName>
        <fullName>Polyprotein P1234</fullName>
        <shortName>P1234</shortName>
    </recommendedName>
    <alternativeName>
        <fullName>Non-structural polyprotein</fullName>
    </alternativeName>
    <component>
        <recommendedName>
            <fullName>Polyprotein P123'</fullName>
            <shortName>P123'</shortName>
        </recommendedName>
    </component>
    <component>
        <recommendedName>
            <fullName>Polyprotein P123</fullName>
            <shortName>P123</shortName>
        </recommendedName>
    </component>
    <component>
        <recommendedName>
            <fullName>mRNA-capping enzyme nsP1</fullName>
            <ecNumber evidence="5">2.1.1.-</ecNumber>
            <ecNumber evidence="5">2.7.7.-</ecNumber>
        </recommendedName>
        <alternativeName>
            <fullName>Non-structural protein 1</fullName>
        </alternativeName>
    </component>
    <component>
        <recommendedName>
            <fullName>Protease nsP2</fullName>
            <ecNumber evidence="4">3.4.22.-</ecNumber>
            <ecNumber evidence="7">3.6.1.15</ecNumber>
            <ecNumber evidence="3">3.6.1.74</ecNumber>
            <ecNumber evidence="7">3.6.4.13</ecNumber>
        </recommendedName>
        <alternativeName>
            <fullName>Non-structural protein 2</fullName>
            <shortName>nsP2</shortName>
        </alternativeName>
    </component>
    <component>
        <recommendedName>
            <fullName>Non-structural protein 3'</fullName>
            <shortName>nsP3'</shortName>
            <ecNumber evidence="4">3.1.3.84</ecNumber>
        </recommendedName>
    </component>
    <component>
        <recommendedName>
            <fullName>Non-structural protein 3</fullName>
            <shortName>nsP3</shortName>
            <ecNumber evidence="4">3.1.3.84</ecNumber>
        </recommendedName>
    </component>
    <component>
        <recommendedName>
            <fullName>RNA-directed RNA polymerase nsP4</fullName>
            <ecNumber evidence="2">2.7.7.19</ecNumber>
            <ecNumber evidence="9">2.7.7.48</ecNumber>
        </recommendedName>
        <alternativeName>
            <fullName>Non-structural protein 4</fullName>
            <shortName>nsP4</shortName>
        </alternativeName>
    </component>
</protein>
<dbReference type="EC" id="2.1.1.-" evidence="5"/>
<dbReference type="EC" id="2.7.7.-" evidence="5"/>
<dbReference type="EC" id="3.4.22.-" evidence="4"/>
<dbReference type="EC" id="3.6.1.15" evidence="7"/>
<dbReference type="EC" id="3.6.1.74" evidence="3"/>
<dbReference type="EC" id="3.6.4.13" evidence="7"/>
<dbReference type="EC" id="3.1.3.84" evidence="4"/>
<dbReference type="EC" id="2.7.7.19" evidence="2"/>
<dbReference type="EC" id="2.7.7.48" evidence="9"/>
<dbReference type="EMBL" id="AF214040">
    <property type="protein sequence ID" value="AAF28339.1"/>
    <property type="molecule type" value="Genomic_RNA"/>
</dbReference>
<dbReference type="EMBL" id="J03854">
    <property type="protein sequence ID" value="AAA42998.1"/>
    <property type="molecule type" value="Genomic_RNA"/>
</dbReference>
<dbReference type="RefSeq" id="NP_640330.1">
    <property type="nucleotide sequence ID" value="NC_003908.1"/>
</dbReference>
<dbReference type="IntAct" id="P13896">
    <property type="interactions" value="2"/>
</dbReference>
<dbReference type="MEROPS" id="C09.002"/>
<dbReference type="GeneID" id="944530"/>
<dbReference type="KEGG" id="vg:944530"/>
<dbReference type="Proteomes" id="UP000007630">
    <property type="component" value="Genome"/>
</dbReference>
<dbReference type="Proteomes" id="UP000111743">
    <property type="component" value="Genome"/>
</dbReference>
<dbReference type="GO" id="GO:0044162">
    <property type="term" value="C:host cell cytoplasmic vesicle membrane"/>
    <property type="evidence" value="ECO:0007669"/>
    <property type="project" value="UniProtKB-SubCell"/>
</dbReference>
<dbReference type="GO" id="GO:0044176">
    <property type="term" value="C:host cell filopodium"/>
    <property type="evidence" value="ECO:0007669"/>
    <property type="project" value="UniProtKB-SubCell"/>
</dbReference>
<dbReference type="GO" id="GO:0042025">
    <property type="term" value="C:host cell nucleus"/>
    <property type="evidence" value="ECO:0007669"/>
    <property type="project" value="UniProtKB-SubCell"/>
</dbReference>
<dbReference type="GO" id="GO:0020002">
    <property type="term" value="C:host cell plasma membrane"/>
    <property type="evidence" value="ECO:0007669"/>
    <property type="project" value="UniProtKB-SubCell"/>
</dbReference>
<dbReference type="GO" id="GO:0016020">
    <property type="term" value="C:membrane"/>
    <property type="evidence" value="ECO:0007669"/>
    <property type="project" value="UniProtKB-KW"/>
</dbReference>
<dbReference type="GO" id="GO:0005524">
    <property type="term" value="F:ATP binding"/>
    <property type="evidence" value="ECO:0007669"/>
    <property type="project" value="UniProtKB-KW"/>
</dbReference>
<dbReference type="GO" id="GO:0016887">
    <property type="term" value="F:ATP hydrolysis activity"/>
    <property type="evidence" value="ECO:0007669"/>
    <property type="project" value="RHEA"/>
</dbReference>
<dbReference type="GO" id="GO:0008234">
    <property type="term" value="F:cysteine-type peptidase activity"/>
    <property type="evidence" value="ECO:0007669"/>
    <property type="project" value="UniProtKB-KW"/>
</dbReference>
<dbReference type="GO" id="GO:0005525">
    <property type="term" value="F:GTP binding"/>
    <property type="evidence" value="ECO:0007669"/>
    <property type="project" value="UniProtKB-KW"/>
</dbReference>
<dbReference type="GO" id="GO:0046872">
    <property type="term" value="F:metal ion binding"/>
    <property type="evidence" value="ECO:0007669"/>
    <property type="project" value="UniProtKB-KW"/>
</dbReference>
<dbReference type="GO" id="GO:0140818">
    <property type="term" value="F:mRNA 5'-triphosphate monophosphatase activity"/>
    <property type="evidence" value="ECO:0007669"/>
    <property type="project" value="RHEA"/>
</dbReference>
<dbReference type="GO" id="GO:0008174">
    <property type="term" value="F:mRNA methyltransferase activity"/>
    <property type="evidence" value="ECO:0007669"/>
    <property type="project" value="InterPro"/>
</dbReference>
<dbReference type="GO" id="GO:1990817">
    <property type="term" value="F:poly(A) RNA polymerase activity"/>
    <property type="evidence" value="ECO:0007669"/>
    <property type="project" value="UniProtKB-EC"/>
</dbReference>
<dbReference type="GO" id="GO:0004651">
    <property type="term" value="F:polynucleotide 5'-phosphatase activity"/>
    <property type="evidence" value="ECO:0007669"/>
    <property type="project" value="UniProtKB-EC"/>
</dbReference>
<dbReference type="GO" id="GO:0003723">
    <property type="term" value="F:RNA binding"/>
    <property type="evidence" value="ECO:0007669"/>
    <property type="project" value="UniProtKB-KW"/>
</dbReference>
<dbReference type="GO" id="GO:0003724">
    <property type="term" value="F:RNA helicase activity"/>
    <property type="evidence" value="ECO:0007669"/>
    <property type="project" value="UniProtKB-EC"/>
</dbReference>
<dbReference type="GO" id="GO:0003968">
    <property type="term" value="F:RNA-directed RNA polymerase activity"/>
    <property type="evidence" value="ECO:0007669"/>
    <property type="project" value="UniProtKB-KW"/>
</dbReference>
<dbReference type="GO" id="GO:0006370">
    <property type="term" value="P:7-methylguanosine mRNA capping"/>
    <property type="evidence" value="ECO:0007669"/>
    <property type="project" value="UniProtKB-KW"/>
</dbReference>
<dbReference type="GO" id="GO:0006351">
    <property type="term" value="P:DNA-templated transcription"/>
    <property type="evidence" value="ECO:0007669"/>
    <property type="project" value="InterPro"/>
</dbReference>
<dbReference type="GO" id="GO:0032259">
    <property type="term" value="P:methylation"/>
    <property type="evidence" value="ECO:0007669"/>
    <property type="project" value="UniProtKB-KW"/>
</dbReference>
<dbReference type="GO" id="GO:0016556">
    <property type="term" value="P:mRNA modification"/>
    <property type="evidence" value="ECO:0007669"/>
    <property type="project" value="InterPro"/>
</dbReference>
<dbReference type="GO" id="GO:0006508">
    <property type="term" value="P:proteolysis"/>
    <property type="evidence" value="ECO:0007669"/>
    <property type="project" value="UniProtKB-KW"/>
</dbReference>
<dbReference type="GO" id="GO:0039657">
    <property type="term" value="P:symbiont-mediated suppression of host gene expression"/>
    <property type="evidence" value="ECO:0007669"/>
    <property type="project" value="UniProtKB-KW"/>
</dbReference>
<dbReference type="GO" id="GO:0039523">
    <property type="term" value="P:symbiont-mediated suppression of host mRNA transcription via inhibition of RNA polymerase II activity"/>
    <property type="evidence" value="ECO:0007669"/>
    <property type="project" value="UniProtKB-KW"/>
</dbReference>
<dbReference type="GO" id="GO:0039694">
    <property type="term" value="P:viral RNA genome replication"/>
    <property type="evidence" value="ECO:0007669"/>
    <property type="project" value="InterPro"/>
</dbReference>
<dbReference type="CDD" id="cd21557">
    <property type="entry name" value="Macro_X_Nsp3-like"/>
    <property type="match status" value="1"/>
</dbReference>
<dbReference type="CDD" id="cd23250">
    <property type="entry name" value="Togaviridae_RdRp"/>
    <property type="match status" value="1"/>
</dbReference>
<dbReference type="FunFam" id="3.40.220.10:FF:000015">
    <property type="entry name" value="Polyprotein P1234"/>
    <property type="match status" value="1"/>
</dbReference>
<dbReference type="FunFam" id="3.40.50.300:FF:001415">
    <property type="entry name" value="Polyprotein P1234"/>
    <property type="match status" value="1"/>
</dbReference>
<dbReference type="Gene3D" id="3.90.70.110">
    <property type="entry name" value="Alphavirus nsP2 protease domain"/>
    <property type="match status" value="1"/>
</dbReference>
<dbReference type="Gene3D" id="3.40.220.10">
    <property type="entry name" value="Leucine Aminopeptidase, subunit E, domain 1"/>
    <property type="match status" value="1"/>
</dbReference>
<dbReference type="Gene3D" id="3.40.50.300">
    <property type="entry name" value="P-loop containing nucleotide triphosphate hydrolases"/>
    <property type="match status" value="2"/>
</dbReference>
<dbReference type="Gene3D" id="3.40.50.150">
    <property type="entry name" value="Vaccinia Virus protein VP39"/>
    <property type="match status" value="1"/>
</dbReference>
<dbReference type="InterPro" id="IPR027351">
    <property type="entry name" value="(+)RNA_virus_helicase_core_dom"/>
</dbReference>
<dbReference type="InterPro" id="IPR002588">
    <property type="entry name" value="Alphavirus-like_MT_dom"/>
</dbReference>
<dbReference type="InterPro" id="IPR002620">
    <property type="entry name" value="Alphavirus_nsp2pro"/>
</dbReference>
<dbReference type="InterPro" id="IPR044936">
    <property type="entry name" value="Alphavirus_nsp2pro_sf"/>
</dbReference>
<dbReference type="InterPro" id="IPR043502">
    <property type="entry name" value="DNA/RNA_pol_sf"/>
</dbReference>
<dbReference type="InterPro" id="IPR002589">
    <property type="entry name" value="Macro_dom"/>
</dbReference>
<dbReference type="InterPro" id="IPR043472">
    <property type="entry name" value="Macro_dom-like"/>
</dbReference>
<dbReference type="InterPro" id="IPR044371">
    <property type="entry name" value="Macro_X_NSP3-like"/>
</dbReference>
<dbReference type="InterPro" id="IPR048891">
    <property type="entry name" value="nsP3_ZBD"/>
</dbReference>
<dbReference type="InterPro" id="IPR027417">
    <property type="entry name" value="P-loop_NTPase"/>
</dbReference>
<dbReference type="InterPro" id="IPR001788">
    <property type="entry name" value="RNA-dep_RNA_pol_alsuvir"/>
</dbReference>
<dbReference type="InterPro" id="IPR007094">
    <property type="entry name" value="RNA-dir_pol_PSvirus"/>
</dbReference>
<dbReference type="InterPro" id="IPR029063">
    <property type="entry name" value="SAM-dependent_MTases_sf"/>
</dbReference>
<dbReference type="InterPro" id="IPR047311">
    <property type="entry name" value="Togaviridae_RdRp"/>
</dbReference>
<dbReference type="InterPro" id="IPR049329">
    <property type="entry name" value="ToMV_Hel_N"/>
</dbReference>
<dbReference type="Pfam" id="PF01661">
    <property type="entry name" value="Macro"/>
    <property type="match status" value="1"/>
</dbReference>
<dbReference type="Pfam" id="PF20852">
    <property type="entry name" value="nsP3_ZBD"/>
    <property type="match status" value="1"/>
</dbReference>
<dbReference type="Pfam" id="PF01707">
    <property type="entry name" value="Peptidase_C9"/>
    <property type="match status" value="1"/>
</dbReference>
<dbReference type="Pfam" id="PF00978">
    <property type="entry name" value="RdRP_2"/>
    <property type="match status" value="1"/>
</dbReference>
<dbReference type="Pfam" id="PF20896">
    <property type="entry name" value="ToMV_Hel_N"/>
    <property type="match status" value="1"/>
</dbReference>
<dbReference type="Pfam" id="PF01443">
    <property type="entry name" value="Viral_helicase1"/>
    <property type="match status" value="1"/>
</dbReference>
<dbReference type="Pfam" id="PF01660">
    <property type="entry name" value="Vmethyltransf"/>
    <property type="match status" value="1"/>
</dbReference>
<dbReference type="SMART" id="SM00506">
    <property type="entry name" value="A1pp"/>
    <property type="match status" value="1"/>
</dbReference>
<dbReference type="SUPFAM" id="SSF56672">
    <property type="entry name" value="DNA/RNA polymerases"/>
    <property type="match status" value="1"/>
</dbReference>
<dbReference type="SUPFAM" id="SSF52949">
    <property type="entry name" value="Macro domain-like"/>
    <property type="match status" value="1"/>
</dbReference>
<dbReference type="SUPFAM" id="SSF52540">
    <property type="entry name" value="P-loop containing nucleoside triphosphate hydrolases"/>
    <property type="match status" value="1"/>
</dbReference>
<dbReference type="PROSITE" id="PS51743">
    <property type="entry name" value="ALPHAVIRUS_MT"/>
    <property type="match status" value="1"/>
</dbReference>
<dbReference type="PROSITE" id="PS51154">
    <property type="entry name" value="MACRO"/>
    <property type="match status" value="1"/>
</dbReference>
<dbReference type="PROSITE" id="PS51520">
    <property type="entry name" value="NSP2PRO"/>
    <property type="match status" value="1"/>
</dbReference>
<dbReference type="PROSITE" id="PS51657">
    <property type="entry name" value="PSRV_HELICASE"/>
    <property type="match status" value="1"/>
</dbReference>
<dbReference type="PROSITE" id="PS50507">
    <property type="entry name" value="RDRP_SSRNA_POS"/>
    <property type="match status" value="1"/>
</dbReference>
<keyword id="KW-0067">ATP-binding</keyword>
<keyword id="KW-1262">Eukaryotic host gene expression shutoff by virus</keyword>
<keyword id="KW-1191">Eukaryotic host transcription shutoff by virus</keyword>
<keyword id="KW-0342">GTP-binding</keyword>
<keyword id="KW-0347">Helicase</keyword>
<keyword id="KW-1032">Host cell membrane</keyword>
<keyword id="KW-1034">Host cell projection</keyword>
<keyword id="KW-1035">Host cytoplasm</keyword>
<keyword id="KW-1036">Host cytoplasmic vesicle</keyword>
<keyword id="KW-1190">Host gene expression shutoff by virus</keyword>
<keyword id="KW-1043">Host membrane</keyword>
<keyword id="KW-1048">Host nucleus</keyword>
<keyword id="KW-0945">Host-virus interaction</keyword>
<keyword id="KW-0378">Hydrolase</keyword>
<keyword id="KW-1104">Inhibition of host RNA polymerase II by virus</keyword>
<keyword id="KW-0449">Lipoprotein</keyword>
<keyword id="KW-0472">Membrane</keyword>
<keyword id="KW-0479">Metal-binding</keyword>
<keyword id="KW-0489">Methyltransferase</keyword>
<keyword id="KW-0506">mRNA capping</keyword>
<keyword id="KW-0507">mRNA processing</keyword>
<keyword id="KW-0511">Multifunctional enzyme</keyword>
<keyword id="KW-0547">Nucleotide-binding</keyword>
<keyword id="KW-0548">Nucleotidyltransferase</keyword>
<keyword id="KW-0564">Palmitate</keyword>
<keyword id="KW-0645">Protease</keyword>
<keyword id="KW-1159">RNA suppression of termination</keyword>
<keyword id="KW-0694">RNA-binding</keyword>
<keyword id="KW-0696">RNA-directed RNA polymerase</keyword>
<keyword id="KW-0949">S-adenosyl-L-methionine</keyword>
<keyword id="KW-0788">Thiol protease</keyword>
<keyword id="KW-0808">Transferase</keyword>
<keyword id="KW-0832">Ubl conjugation</keyword>
<keyword id="KW-0693">Viral RNA replication</keyword>
<keyword id="KW-0862">Zinc</keyword>
<evidence type="ECO:0000250" key="1">
    <source>
        <dbReference type="UniProtKB" id="O90368"/>
    </source>
</evidence>
<evidence type="ECO:0000250" key="2">
    <source>
        <dbReference type="UniProtKB" id="P03317"/>
    </source>
</evidence>
<evidence type="ECO:0000250" key="3">
    <source>
        <dbReference type="UniProtKB" id="P08411"/>
    </source>
</evidence>
<evidence type="ECO:0000250" key="4">
    <source>
        <dbReference type="UniProtKB" id="P27282"/>
    </source>
</evidence>
<evidence type="ECO:0000250" key="5">
    <source>
        <dbReference type="UniProtKB" id="P36328"/>
    </source>
</evidence>
<evidence type="ECO:0000250" key="6">
    <source>
        <dbReference type="UniProtKB" id="Q4QXJ8"/>
    </source>
</evidence>
<evidence type="ECO:0000250" key="7">
    <source>
        <dbReference type="UniProtKB" id="Q8JUX6"/>
    </source>
</evidence>
<evidence type="ECO:0000255" key="8">
    <source>
        <dbReference type="PROSITE-ProRule" id="PRU00490"/>
    </source>
</evidence>
<evidence type="ECO:0000255" key="9">
    <source>
        <dbReference type="PROSITE-ProRule" id="PRU00539"/>
    </source>
</evidence>
<evidence type="ECO:0000255" key="10">
    <source>
        <dbReference type="PROSITE-ProRule" id="PRU00853"/>
    </source>
</evidence>
<evidence type="ECO:0000255" key="11">
    <source>
        <dbReference type="PROSITE-ProRule" id="PRU00990"/>
    </source>
</evidence>
<evidence type="ECO:0000255" key="12">
    <source>
        <dbReference type="PROSITE-ProRule" id="PRU01079"/>
    </source>
</evidence>
<evidence type="ECO:0000256" key="13">
    <source>
        <dbReference type="SAM" id="MobiDB-lite"/>
    </source>
</evidence>
<evidence type="ECO:0000305" key="14"/>
<organism>
    <name type="scientific">Western equine encephalitis virus</name>
    <name type="common">WEEV</name>
    <dbReference type="NCBI Taxonomy" id="11039"/>
    <lineage>
        <taxon>Viruses</taxon>
        <taxon>Riboviria</taxon>
        <taxon>Orthornavirae</taxon>
        <taxon>Kitrinoviricota</taxon>
        <taxon>Alsuviricetes</taxon>
        <taxon>Martellivirales</taxon>
        <taxon>Togaviridae</taxon>
        <taxon>Alphavirus</taxon>
    </lineage>
</organism>
<comment type="function">
    <molecule>Polyprotein P1234</molecule>
    <text evidence="7">Inactive precursor of the viral replicase, which is activated by cleavages carried out by the viral protease nsP2.</text>
</comment>
<comment type="function">
    <molecule>Polyprotein P123</molecule>
    <text evidence="2 14">The early replication complex formed by the polyprotein P123 and nsP4 synthesizes the minus-strand RNAs (antigenome) (By similarity). Polyprotein P123 is a short-lived polyprotein that accumulates during early stage of infection (Probable). As soon P123 is cleaved into mature proteins, the plus-strand RNAs synthesis begins (By similarity).</text>
</comment>
<comment type="function">
    <molecule>Polyprotein P123'</molecule>
    <text evidence="14">The early replication complex formed by the polyprotein P123' and nsP4 synthesizes minus-strand RNAs (antigenome) (Probable). Polyprotein P123' is a short-lived polyprotein that accumulates during early stage of infection (Probable). As soon P123' is cleaved into mature proteins, the plus-strand RNAs synthesis begins (Probable).</text>
</comment>
<comment type="function">
    <molecule>mRNA-capping enzyme nsP1</molecule>
    <text evidence="2 3 4 7 14">Cytoplasmic capping enzyme that catalyzes two virus-specific reactions: methyltransferase and nsP1 guanylyltransferase (By similarity). mRNA-capping is necessary since all viral RNAs are synthesized in the cytoplasm, and host capping enzymes are restricted to the nucleus (Probable). The enzymatic reaction involves a covalent link between 7-methyl-GMP and nsP1, whereas eukaryotic capping enzymes form a covalent complex only with GMP (Probable). NsP1 capping consists in the following reactions: GTP is first methylated into 7-methyl-GMP and then is covalently linked to nsP1 to form the m7GMp-nsP1 complex from which 7-methyl-GMP complex is transferred to the mRNA to create the cap structure (By similarity). NsP1 is also needed for the initiation of the minus-strand RNAs synthesis (By similarity). Probably serves as a membrane anchor for the replication complex composed of nsP1-nsP4 (By similarity). Nsp1 is needed for the initiation of the minus-strand RNAs synthesis (By similarity). Palmitoylated nsP1 is remodeling host cell cytoskeleton, and induces filopodium-like structure formation at the surface of the host cell (By similarity).</text>
</comment>
<comment type="function">
    <molecule>Protease nsP2</molecule>
    <text evidence="2 3 4 7">Multifunctional protein whose N-terminus is part of the RNA polymerase complex and displays NTPase, RNA triphosphatase and helicase activities (By similarity). NTPase and RNA triphosphatase are involved in viral RNA capping and helicase keeps a check on the dsRNA replication intermediates (By similarity). The C-terminus harbors a protease that specifically cleaves the polyproteins and releases the mature proteins (By similarity). Required for the shutoff of minus-strand RNAs synthesis (By similarity). Inhibits host translation to ensure maximal viral gene expression and evade host immune response (By similarity).</text>
</comment>
<comment type="function">
    <molecule>Non-structural protein 3</molecule>
    <text evidence="2 4 6">Seems to be essential for minus-strand RNAs and subgenomic 26S mRNAs synthesis (By similarity). Displays mono-ADP-ribosylhydrolase activity (By similarity). ADP-ribosylation is a post-translational modification that controls various processes of the host cell and the virus probably needs to revert it for optimal viral replication (By similarity). Binds proteins of FXR and G3BP families and sequesters them into the viral RNA replication complexes thereby inhibiting the formation of host stress granules on viral mRNAs (By similarity). The nsp3-FXR and nsp3-G3BP complexes bind viral RNAs and probably orchestrate the assembly of viral replication complexes, thanks to the ability of G3BP and FXR family members to self-assemble and bind DNA (By similarity).</text>
</comment>
<comment type="function">
    <molecule>Non-structural protein 3'</molecule>
    <text evidence="2 14">Seems to be essential for minus-strand RNAs and subgenomic 26S mRNAs synthesis (By similarity). Displays mono-ADP-ribosylhydrolase activity (Probable). ADP-ribosylation is a post-translational modification that controls various processes of the host cell and the virus probably needs to revert it for optimal viral replication (Probable). Binds proteins of FXR and G3BP families and sequesters them into the viral RNA replication complexes thereby inhibiting the formation of host stress granules on viral mRNAs (Probable). The nsp3'-FXR and nsp3-G3BP complexes bind viral RNAs and probably orchestrate the assembly of viral replication complexes, thanks to the ability of G3BP and FXR family members to self-assemble and bind DNA (Probable).</text>
</comment>
<comment type="function">
    <molecule>RNA-directed RNA polymerase nsP4</molecule>
    <text evidence="2">RNA dependent RNA polymerase (By similarity). Replicates genomic and antigenomic RNA by recognizing replications specific signals. The early replication complex formed by the polyprotein P123 and nsP4 synthesizes minus-strand RNAs (By similarity). The late replication complex composed of fully processed nsP1-nsP4 is responsible for the production of genomic and subgenomic plus-strand RNAs (By similarity).</text>
</comment>
<comment type="catalytic activity">
    <reaction evidence="4">
        <text>GTP + S-adenosyl-L-methionine = N(7)-methyl-GTP + S-adenosyl-L-homocysteine</text>
        <dbReference type="Rhea" id="RHEA:46948"/>
        <dbReference type="ChEBI" id="CHEBI:37565"/>
        <dbReference type="ChEBI" id="CHEBI:57856"/>
        <dbReference type="ChEBI" id="CHEBI:59789"/>
        <dbReference type="ChEBI" id="CHEBI:87133"/>
    </reaction>
</comment>
<comment type="catalytic activity">
    <reaction evidence="4">
        <text>N(7)-methyl-GTP + L-histidyl-[protein] = N(tele)-(N(7)-methylguanosine 5'-phospho)-L-histidyl-[protein] + diphosphate</text>
        <dbReference type="Rhea" id="RHEA:54792"/>
        <dbReference type="Rhea" id="RHEA-COMP:9745"/>
        <dbReference type="Rhea" id="RHEA-COMP:13995"/>
        <dbReference type="ChEBI" id="CHEBI:29979"/>
        <dbReference type="ChEBI" id="CHEBI:33019"/>
        <dbReference type="ChEBI" id="CHEBI:87133"/>
        <dbReference type="ChEBI" id="CHEBI:138334"/>
    </reaction>
    <physiologicalReaction direction="left-to-right" evidence="4">
        <dbReference type="Rhea" id="RHEA:54793"/>
    </physiologicalReaction>
</comment>
<comment type="catalytic activity">
    <reaction evidence="4">
        <text>N(tele)-(N(7)-methylguanosine 5'-phospho)-L-histidyl-[protein] + a 5'-end diphospho-(purine-ribonucleoside) in mRNA + H(+) = a 5'-end (N(7)-methyl 5'-triphosphoguanosine)-(purine-ribonucleoside) in mRNA + L-histidyl-[protein]</text>
        <dbReference type="Rhea" id="RHEA:54800"/>
        <dbReference type="Rhea" id="RHEA-COMP:9745"/>
        <dbReference type="Rhea" id="RHEA-COMP:12925"/>
        <dbReference type="Rhea" id="RHEA-COMP:13929"/>
        <dbReference type="Rhea" id="RHEA-COMP:13995"/>
        <dbReference type="ChEBI" id="CHEBI:15378"/>
        <dbReference type="ChEBI" id="CHEBI:29979"/>
        <dbReference type="ChEBI" id="CHEBI:133968"/>
        <dbReference type="ChEBI" id="CHEBI:138276"/>
        <dbReference type="ChEBI" id="CHEBI:138334"/>
    </reaction>
</comment>
<comment type="catalytic activity">
    <reaction evidence="3">
        <text>a 5'-end triphospho-ribonucleoside in mRNA + H2O = a 5'-end diphospho-ribonucleoside in mRNA + phosphate + H(+)</text>
        <dbReference type="Rhea" id="RHEA:67004"/>
        <dbReference type="Rhea" id="RHEA-COMP:17164"/>
        <dbReference type="Rhea" id="RHEA-COMP:17165"/>
        <dbReference type="ChEBI" id="CHEBI:15377"/>
        <dbReference type="ChEBI" id="CHEBI:15378"/>
        <dbReference type="ChEBI" id="CHEBI:43474"/>
        <dbReference type="ChEBI" id="CHEBI:167616"/>
        <dbReference type="ChEBI" id="CHEBI:167618"/>
        <dbReference type="EC" id="3.6.1.74"/>
    </reaction>
    <physiologicalReaction direction="left-to-right" evidence="3">
        <dbReference type="Rhea" id="RHEA:67005"/>
    </physiologicalReaction>
</comment>
<comment type="catalytic activity">
    <reaction evidence="7">
        <text>a ribonucleoside 5'-triphosphate + H2O = a ribonucleoside 5'-diphosphate + phosphate + H(+)</text>
        <dbReference type="Rhea" id="RHEA:23680"/>
        <dbReference type="ChEBI" id="CHEBI:15377"/>
        <dbReference type="ChEBI" id="CHEBI:15378"/>
        <dbReference type="ChEBI" id="CHEBI:43474"/>
        <dbReference type="ChEBI" id="CHEBI:57930"/>
        <dbReference type="ChEBI" id="CHEBI:61557"/>
        <dbReference type="EC" id="3.6.1.15"/>
    </reaction>
</comment>
<comment type="catalytic activity">
    <reaction evidence="7">
        <text>ATP + H2O = ADP + phosphate + H(+)</text>
        <dbReference type="Rhea" id="RHEA:13065"/>
        <dbReference type="ChEBI" id="CHEBI:15377"/>
        <dbReference type="ChEBI" id="CHEBI:15378"/>
        <dbReference type="ChEBI" id="CHEBI:30616"/>
        <dbReference type="ChEBI" id="CHEBI:43474"/>
        <dbReference type="ChEBI" id="CHEBI:456216"/>
        <dbReference type="EC" id="3.6.4.13"/>
    </reaction>
</comment>
<comment type="catalytic activity">
    <reaction evidence="9">
        <text>RNA(n) + a ribonucleoside 5'-triphosphate = RNA(n+1) + diphosphate</text>
        <dbReference type="Rhea" id="RHEA:21248"/>
        <dbReference type="Rhea" id="RHEA-COMP:14527"/>
        <dbReference type="Rhea" id="RHEA-COMP:17342"/>
        <dbReference type="ChEBI" id="CHEBI:33019"/>
        <dbReference type="ChEBI" id="CHEBI:61557"/>
        <dbReference type="ChEBI" id="CHEBI:140395"/>
        <dbReference type="EC" id="2.7.7.48"/>
    </reaction>
</comment>
<comment type="catalytic activity">
    <reaction evidence="4">
        <text>4-O-(ADP-D-ribosyl)-L-aspartyl-[protein] + H2O = L-aspartyl-[protein] + ADP-D-ribose + H(+)</text>
        <dbReference type="Rhea" id="RHEA:54428"/>
        <dbReference type="Rhea" id="RHEA-COMP:9867"/>
        <dbReference type="Rhea" id="RHEA-COMP:13832"/>
        <dbReference type="ChEBI" id="CHEBI:15377"/>
        <dbReference type="ChEBI" id="CHEBI:15378"/>
        <dbReference type="ChEBI" id="CHEBI:29961"/>
        <dbReference type="ChEBI" id="CHEBI:57967"/>
        <dbReference type="ChEBI" id="CHEBI:138102"/>
    </reaction>
    <physiologicalReaction direction="left-to-right" evidence="4">
        <dbReference type="Rhea" id="RHEA:54429"/>
    </physiologicalReaction>
</comment>
<comment type="catalytic activity">
    <reaction evidence="4">
        <text>5-O-(ADP-D-ribosyl)-L-glutamyl-[protein] + H2O = L-glutamyl-[protein] + ADP-D-ribose + H(+)</text>
        <dbReference type="Rhea" id="RHEA:58248"/>
        <dbReference type="Rhea" id="RHEA-COMP:10208"/>
        <dbReference type="Rhea" id="RHEA-COMP:15089"/>
        <dbReference type="ChEBI" id="CHEBI:15377"/>
        <dbReference type="ChEBI" id="CHEBI:15378"/>
        <dbReference type="ChEBI" id="CHEBI:29973"/>
        <dbReference type="ChEBI" id="CHEBI:57967"/>
        <dbReference type="ChEBI" id="CHEBI:142540"/>
    </reaction>
    <physiologicalReaction direction="left-to-right" evidence="4">
        <dbReference type="Rhea" id="RHEA:58249"/>
    </physiologicalReaction>
</comment>
<comment type="catalytic activity">
    <reaction evidence="2">
        <text>RNA(n) + ATP = RNA(n)-3'-adenine ribonucleotide + diphosphate</text>
        <dbReference type="Rhea" id="RHEA:11332"/>
        <dbReference type="Rhea" id="RHEA-COMP:14527"/>
        <dbReference type="Rhea" id="RHEA-COMP:17347"/>
        <dbReference type="ChEBI" id="CHEBI:30616"/>
        <dbReference type="ChEBI" id="CHEBI:33019"/>
        <dbReference type="ChEBI" id="CHEBI:140395"/>
        <dbReference type="ChEBI" id="CHEBI:173115"/>
        <dbReference type="EC" id="2.7.7.19"/>
    </reaction>
</comment>
<comment type="catalytic activity">
    <reaction evidence="5">
        <text>ADP-alpha-D-ribose 1''-phosphate + H2O = ADP-D-ribose + phosphate</text>
        <dbReference type="Rhea" id="RHEA:25029"/>
        <dbReference type="ChEBI" id="CHEBI:15377"/>
        <dbReference type="ChEBI" id="CHEBI:43474"/>
        <dbReference type="ChEBI" id="CHEBI:57967"/>
        <dbReference type="ChEBI" id="CHEBI:58753"/>
        <dbReference type="EC" id="3.1.3.84"/>
    </reaction>
    <physiologicalReaction direction="left-to-right" evidence="5">
        <dbReference type="Rhea" id="RHEA:25030"/>
    </physiologicalReaction>
</comment>
<comment type="cofactor">
    <cofactor evidence="2">
        <name>Mg(2+)</name>
        <dbReference type="ChEBI" id="CHEBI:18420"/>
    </cofactor>
    <cofactor evidence="2">
        <name>Mn(2+)</name>
        <dbReference type="ChEBI" id="CHEBI:29035"/>
    </cofactor>
    <text evidence="2">For nsP4 adenylyltransferase activity; Mn(2+) supports catalysis at 60% of the levels observed with Mg(2+).</text>
</comment>
<comment type="cofactor">
    <cofactor evidence="2">
        <name>Mg(2+)</name>
        <dbReference type="ChEBI" id="CHEBI:18420"/>
    </cofactor>
    <text evidence="2">For nsP4 RNA-directed RNA polymerase activity.</text>
</comment>
<comment type="cofactor">
    <cofactor evidence="4">
        <name>Mg(2+)</name>
        <dbReference type="ChEBI" id="CHEBI:18420"/>
    </cofactor>
    <text evidence="4">For nsP1 guanylylation.</text>
</comment>
<comment type="cofactor">
    <cofactor>
        <name>Mg(2+)</name>
        <dbReference type="ChEBI" id="CHEBI:18420"/>
    </cofactor>
    <text evidence="7">For nsP2 RNA triphosphatase activity.</text>
</comment>
<comment type="cofactor">
    <cofactor>
        <name>Mg(2+)</name>
        <dbReference type="ChEBI" id="CHEBI:18420"/>
    </cofactor>
    <text evidence="7">For nsP2 NTPase activity.</text>
</comment>
<comment type="activity regulation">
    <molecule>mRNA-capping enzyme nsP1</molecule>
    <text evidence="4">Inhibited by sinefungin.</text>
</comment>
<comment type="subunit">
    <molecule>mRNA-capping enzyme nsP1</molecule>
    <text evidence="4 6 7">Interacts with non-structural protein 3 (By similarity). Interacts with RNA-directed RNA polymerase nsP4 (By similarity). Interacts with protease nsP2 (By similarity). interacts with itself (By similarity).</text>
</comment>
<comment type="subunit">
    <molecule>Non-structural protein 3</molecule>
    <text evidence="4 6 7">Interacts with mRNA-capping enzyme nsP1 (By similarity). Interacts with host DDX1 (By similarity). Interacts with host DDX3 (By similarity). Interacts (via C-terminus) with host FXR1; this interaction inhibits the formation of host stress granules on viral mRNAs and the nsp3-FXR1 complexes bind viral RNAs and probably orchestrate the assembly of viral replication complexes (By similarity). Interacts (via C-terminus) with host FXR2; this interaction inhibits the formation of host stress granules on viral mRNAs and the nsp3-FXR2 complexes bind viral RNAs and probably orchestrate the assembly of viral replication complexes (By similarity). Interacts (via C-terminus) with host FMR1; this interaction inhibits the formation of host stress granules on viral mRNAs and the nsp3-FMR1 complexes bind viral RNAs and probably orchestrate the assembly of viral replication complexes (By similarity).</text>
</comment>
<comment type="subunit">
    <molecule>RNA-directed RNA polymerase nsP4</molecule>
    <text evidence="4 6 7">Interacts with mRNA-capping enzyme nsP1 (By similarity). Interacts with protease nsP2 (By similarity). interacts with itself (By similarity).</text>
</comment>
<comment type="subunit">
    <molecule>Protease nsP2</molecule>
    <text evidence="4 6 7">Interacts with RNA-directed RNA polymerase nsP4 (By similarity). Interacts with mRNA-capping enzyme nsP1 (By similarity). Interacts with KPNA1/karyopherin-alpha1; this interaction probably allows the active transport of protease nsP2 into the host nucleus (By similarity).</text>
</comment>
<comment type="subcellular location">
    <molecule>Polyprotein P1234</molecule>
    <subcellularLocation>
        <location evidence="14">Host cytoplasmic vesicle membrane</location>
        <topology evidence="14">Peripheral membrane protein</topology>
    </subcellularLocation>
    <text evidence="14">Part of cytoplasmic vesicles, which are probably formed at the plasma membrane and internalized leading to late endosomal/lysosomal spherules containing the replication complex.</text>
</comment>
<comment type="subcellular location">
    <molecule>Polyprotein P123'</molecule>
    <subcellularLocation>
        <location evidence="14">Host cytoplasmic vesicle membrane</location>
        <topology evidence="14">Peripheral membrane protein</topology>
    </subcellularLocation>
    <text evidence="14">Part of cytoplasmic vesicles, which are probably formed at the plasma membrane and internalized leading to late endosomal/lysosomal spherules containing the replication complex.</text>
</comment>
<comment type="subcellular location">
    <molecule>Polyprotein P123</molecule>
    <subcellularLocation>
        <location evidence="14">Host cytoplasmic vesicle membrane</location>
        <topology evidence="14">Peripheral membrane protein</topology>
    </subcellularLocation>
    <text evidence="14">Part of cytoplasmic vesicles, which are probably formed at the plasma membrane and internalized leading to late endosomal/lysosomal spherules containing the replication complex.</text>
</comment>
<comment type="subcellular location">
    <molecule>mRNA-capping enzyme nsP1</molecule>
    <subcellularLocation>
        <location evidence="3">Host cytoplasmic vesicle membrane</location>
        <topology evidence="3">Lipid-anchor</topology>
    </subcellularLocation>
    <subcellularLocation>
        <location evidence="3">Host cell membrane</location>
        <topology evidence="3">Lipid-anchor</topology>
        <orientation evidence="3">Cytoplasmic side</orientation>
    </subcellularLocation>
    <subcellularLocation>
        <location evidence="3">Host cell projection</location>
        <location evidence="3">Host filopodium</location>
    </subcellularLocation>
    <text evidence="3">In the late phase of infection, the polyprotein is quickly cleaved before localization to cellular membranes. Then a fraction of nsP1 localizes to the inner surface of the plasma membrane and its filopodial extensions. Only the palmitoylated nsP1 localizes to the host filopodia (By similarity). NsP1 is also part of cytoplasmic vesicles, which are probably formed at the plasma membrane and internalized leading to late endosomal/lysosomal spherules containing the replication complex (By similarity).</text>
</comment>
<comment type="subcellular location">
    <molecule>Protease nsP2</molecule>
    <subcellularLocation>
        <location evidence="3">Host cytoplasmic vesicle membrane</location>
        <topology evidence="3">Peripheral membrane protein</topology>
    </subcellularLocation>
    <subcellularLocation>
        <location evidence="4">Host nucleus</location>
    </subcellularLocation>
    <subcellularLocation>
        <location evidence="4">Host cytoplasm</location>
    </subcellularLocation>
    <text evidence="3 4">In the late phase of infection, the polyprotein is quickly cleaved before localization to cellular membranes. Then approximately half of nsP2 is found in the nucleus (By similarity). Shuttles between cytoplasm and nucleus (By similarity). NsP2 is also part of cytoplasmic vesicles, which are probably formed at the plasma membrane and internalized leading to late endosomal/lysosomal spherules containing the replication complex (By similarity).</text>
</comment>
<comment type="subcellular location">
    <molecule>Non-structural protein 3</molecule>
    <subcellularLocation>
        <location evidence="2">Host cytoplasmic vesicle membrane</location>
        <topology evidence="14">Peripheral membrane protein</topology>
    </subcellularLocation>
    <text evidence="2">In the late phase of infection, the polyprotein is quickly cleaved before localization to cellular membranes. Then nsP3 and nsP3' form aggregates in cytoplasm (By similarity). NsP3 is also part of cytoplasmic vesicles, which are probably formed at the plasma membrane and internalized leading to late endosomal/lysosomal spherules containing the replication complex (By similarity).</text>
</comment>
<comment type="subcellular location">
    <molecule>Non-structural protein 3'</molecule>
    <subcellularLocation>
        <location evidence="14">Host cytoplasmic vesicle membrane</location>
        <topology evidence="14">Peripheral membrane protein</topology>
    </subcellularLocation>
    <text evidence="2 14">In the late phase of infection, the polyprotein is quickly cleaved before localization to cellular membranes. Then nsP3 and nsP3' form aggregates in cytoplasm (By similarity). NsP3' is also part of cytoplasmic vesicles, which are probably formed at the plasma membrane and internalized leading to late endosomal/lysosomal spherules containing the replication complex (Probable).</text>
</comment>
<comment type="subcellular location">
    <molecule>RNA-directed RNA polymerase nsP4</molecule>
    <subcellularLocation>
        <location>Host cytoplasmic vesicle membrane</location>
        <topology evidence="3">Peripheral membrane protein</topology>
    </subcellularLocation>
    <text evidence="3">NsP4 is part of cytoplasmic vesicles, which are probably formed at the plasma membrane and internalized leading to late endosomal/lysosomal spherules containing the replication complex.</text>
</comment>
<comment type="domain">
    <molecule>Protease nsP2</molecule>
    <text evidence="4 7">The N-terminus exhibits NTPase and RNA triphosphatase activities and is proposed to have helicase activity, whereas the C-terminus possesses protease activity (By similarity). Contains a nuclear localization signal and a nuclear export signal, these two motifs are probably involved in the shuttling between the cytoplasm and the nucleus of nsP2 (By similarity).</text>
</comment>
<comment type="domain">
    <molecule>Non-structural protein 3</molecule>
    <text evidence="2 4 6">In the N-terminus, the macro domain displays a mono-ADP-ribosylhydrolase activity (By similarity). The central part has a zinc-binding function (By similarity). The C-terminus contains two regions responsible for the formation of the nsP3/FXR complex (By similarity).</text>
</comment>
<comment type="domain">
    <molecule>Non-structural protein 3</molecule>
    <text evidence="2 4 6">In the N-terminus, the macro domain displays a mono-ADP-ribosylhydrolase activity (By similarity). The central part has a zinc-binding function (By similarity). The C-terminus contains two regions responsible for the formation of the nsP3'/FXR complex (By similarity).</text>
</comment>
<comment type="PTM">
    <molecule>Polyprotein P1234</molecule>
    <text evidence="2">Specific enzymatic cleavages in vivo yield mature proteins (By similarity). The processing of the polyprotein is temporally regulated (By similarity). In early stages (1.7 hpi), P1234 is first cleaved in trans through its nsP2 protease activity, releasing P123' and nsP4, which associate to form the early replication complex (By similarity). At the same time, P1234 is also cut at the nsP1/nsP2 site early in infection but with lower efficiency (By similarity). After replication of the viral minus-strand RNAs (4 hpi), the polyproteins are cut at the nsP1/nsP2 and nsP2/nsP3 sites very efficiently, preventing accumulation of P123' and P1234 and allowing the formation of the late replication complex (By similarity). NsP3'/nsP4 site is not cleaved anymore and P34 is produced rather than nsP4 (By similarity).</text>
</comment>
<comment type="PTM">
    <molecule>Polyprotein P123</molecule>
    <text evidence="2">Specific enzymatic cleavages in vivo yield mature proteins (By similarity). The processing of the polyprotein is temporally regulated (By similarity). In early stages (1.7 hpi), P123 is cleaved at the nsP1/nsP2 site with low efficiency (By similarity). After replication of the viral minus-strand RNAs (4 hpi), the polyproteins are cut at the nsP1/nsP2 and nsP2/nsP3 sites very efficiently, preventing accumulation of P123 and allowing the formation of the late replication complex (By similarity).</text>
</comment>
<comment type="PTM">
    <molecule>Polyprotein P123'</molecule>
    <text evidence="2">Specific enzymatic cleavages in vivo yield mature proteins (By similarity). The processing of the polyprotein is temporally regulated (By similarity). In early stages (1.7 hpi), P123' is cleaved at the nsP1/nsP2 site with low efficiency (By similarity). After replication of the viral minus-strand RNAs (4 hpi), the polyproteins are cut at the nsP1/nsP2 and nsP2/nsP3 sites very efficiently, preventing accumulation of P123' and allowing the formation of the late replication complex (By similarity).</text>
</comment>
<comment type="PTM">
    <molecule>mRNA-capping enzyme nsP1</molecule>
    <text evidence="2">Palmitoylated by host palmitoyltransferases ZDHHC2 and ZDHHC19.</text>
</comment>
<comment type="PTM">
    <molecule>Non-structural protein 3</molecule>
    <text evidence="3">Phosphorylated by host on serines and threonines.</text>
</comment>
<comment type="PTM">
    <molecule>Non-structural protein 3'</molecule>
    <text evidence="3">Phosphorylated by host on serines and threonines.</text>
</comment>
<comment type="PTM">
    <molecule>RNA-directed RNA polymerase nsP4</molecule>
    <text evidence="2">Ubiquitinated; targets the protein for rapid degradation via the ubiquitin system (By similarity). Nsp4 is present in extremely low quantities due to low frequency of translation through the amber stop-codon and the degradation by the ubiquitin pathway (By similarity).</text>
</comment>
<comment type="miscellaneous">
    <text evidence="2">Viral replication produces dsRNA in the late phase of infection, resulting in a strong activation of host EIF2AK2/PKR, leading to almost complete phosphorylation of EIF2A (By similarity). This inactivates completely cellular translation initiation, resulting shutoff of host proteins synthesis (By similarity). However, phosphorylation of EIF2A is probably not the only mechanism responsible for the host translation shutoff (By similarity). The viral translation can still occur normally because it relies on a hairpin structure in the coding region of sgRNA and is EIF2A-, EIF2D-, EIF4G- EIF4A-independent (By similarity).</text>
</comment>
<comment type="miscellaneous">
    <text evidence="1 2 14">The genome codes for P123, but readthrough of a terminator codon UGA occurs between the codons for Asn-1852 and Arg-1854 giving rise to P1234 (Probable). P1234 is cleaved quickly by nsP2 into P123' and nsP4 (By similarity). Further processing of p123' gives nsP1, nsP2 and nsP3' which is 6 amino acids longer than nsP3 since the cleavage site is after the readthrough (By similarity). This unusual molecular mechanism ensures that few nsP4 are produced compared to other non-structural proteins (By similarity). Mutant viruses with no alternative termination site grow significantly slower than wild-type virus (By similarity). The opal termination codon is frequently mutated to a sense codon on passage in cell culture (By similarity). The presence of the opal codon may be a requirement for viral maintenance in both vertebrate and invertebrate hosts and a selective advantage may be conferred in cell culture for the sense codon (By similarity).</text>
</comment>
<accession>P13896</accession>
<accession>Q9J1K2</accession>
<reference key="1">
    <citation type="journal article" date="2000" name="J. Gen. Virol.">
        <title>Complete genomic RNA sequence of western equine encephalitis virus and expression of the structural genes.</title>
        <authorList>
            <person name="Netolitzky D.J."/>
            <person name="Schmaltz F.L."/>
            <person name="Parker M.D."/>
            <person name="Rayner G.A."/>
            <person name="Fisher G.R."/>
            <person name="Trent D.W."/>
            <person name="Bader D.E."/>
            <person name="Nagata L.P."/>
        </authorList>
    </citation>
    <scope>NUCLEOTIDE SEQUENCE [GENOMIC RNA]</scope>
</reference>
<reference key="2">
    <citation type="journal article" date="1988" name="Proc. Natl. Acad. Sci. U.S.A.">
        <title>Western equine encephalitis virus is a recombinant virus.</title>
        <authorList>
            <person name="Hahn C.S."/>
            <person name="Lustig S."/>
            <person name="Strauss E.G."/>
            <person name="Strauss J.H."/>
        </authorList>
    </citation>
    <scope>NUCLEOTIDE SEQUENCE [GENOMIC RNA] OF 2431-2467</scope>
    <source>
        <strain>BFS1703</strain>
    </source>
</reference>
<sequence>MERIHVDLDADSPYVKSLQRTFPQFEIEARQVTDNDHANARAFSHVATKLIESEVDRDQVILDIGSAPVRHAHSNHRYHCICPMISAEDPDRLQRYAERLKKSDITDKNIASKAADLLEVMSTPDAETPSLCMHTDATCRYFGSVAVYQDVYAVHAPTSIYHQALKGVRTIYWIGFDTTPFMYKNMAGSYPTYNTNWADERVLEARNIGLGNSDLQESRLGKLSILRKKRLQPTNKIIFSVGSTIYTEDRSLLRSWHLPNVFHLKGKSNFTGRCGTIVSCEGYVIKKITISPGLYGKVENLASTMHREGFLSCKVTDTLRGERVSFAVCTYVPATLCDQMTGILATDVSVDDAQKLLVGLNQRIVVNGRTQRNTNTMQNYLLPVVAQAFSRWAREHRADLDDEKELGVRERTLTMGCCWAFKTQKITSIYKKPGTQTIKKVPAVFDSFVIPRLTSHGLDMGFRRRLKLLLEPTVKPAPAITMADVEHLRGLQQEAEEVAAAEEIREALPPLLPEIEKETVEAEVDLIMQEAGAGSVETPRGHIRVTSYPGEEKIGSYAILSPQAVLNSEKLACIHPLAEQVLVMTHKGRAGRYKVEPYHGKVIVPEGTAVPVQDFQALSESATIVFNEREFVNRYLHHIAINGGALNTDEEYYKTVKTQDTDSEYVFDIDARKCVKREDAGPLCLTGDLVDPPFHEFAYESLKTRPAAPHKVPTIGVYGVPGSGKSGIIKSAVTKKDLVVSAKKENCAEIIRDVRRMRRMDVAARTVDSVLLNGVKHPVNTLYIDEAFACHAGTLLALIAIVKPKKVVLCGDPKQCGFFNMMCLKVHFNHDICTEVYHKSISRRCTQTVTAIVSTLFYDKRMKTVNPCADKIIIDTTGTTKPHKDDLILTCFRGWVKQLQIDYKNHEIMTAAASQGLTRKGVYAVRYKVNENPLYSQTSEHVNVLLTRTEKRIVWKTLAGDPWIKTLTAKYPGDFTASLDDWQREHDAIMARVLDKPQTADVFQNKVNVCWAKALEPVLATANIVLTRQQWETLHPFKHDRAYSPEMALNFFCTRFFGVDLDSGLFSAPTVALTYRDQHWDNSPGKNMYGLNREVAKELSRRYPCITKAVDTGRVADIRNNTIKDYSPTINVVPLNRRLPHSLIVDHKGQGTTDHSGFLSKMKGKSVLVIGDPISIPGKKVESMGPLPTNTIRCDLDLGIPSHVGKYDIIFVNVRTPYRNHHYQQCEDHAIHHSMLTCKAVHHLNTGGTCVAIGYGLADRATENIITAVARSFRFTRVCQPKNTAENTEVLFVFFGKDNGNHTHDQDRLGVVLDNIYQGSTRYEAGRAPAYRVIRGDISKSADQAIVNAANSKGQPGSGVCGALYRKWPAAFDRQPIAVGTARLVKHEPLIIHAVGPNFSKMPEPEGDLKLAAAYMSIASIVNAERITKISVPLLSTGIYSGGKDRVMQSLHHLFTAFDTTDADVTIYCLDKQWETRIIEAIHRKESVEILDDDKPVDIDLVRVHPNSSLAGRPGYSVNEGKLYSYLEGTRFHQTAKDIAEIHAMWPNKSEANEQICLYILGESMSSIRSKCPVEESEASAPPHTLPCLCNYAMTAERVYRLRSAKKEQFAVCSSFLLPKYRITGVQKLQCSKPVLFSGVVPPAVHPRKYAEIILETPPPPATTTVICEPTVPERIPSPVISRAPSAESLLSLGGVSFSSSATRSSTAWSDYDRRFVVTADVHQANTSTWSIPSAPGLDVQLPSDVTDSHWSIPSASGFEVRTPSVQDLTAECAKPRGLAEIMQDFNTAPFQFLSDYRPVPAPRRRPIPSPRSTASAPPVPKPRRTKYQQPPGVARAISEAELDEYIRQHSNXRYEAGAYIFSSETGQGHLQQKSVRQCKLQEPILDRAVHEKYYAPRLDLEREKMLQKKLQLCASEGNRSRYQSRKVENMKAITAERLISGLGTYLSSEVNPVECYRVNYPVPIYSSTVINRFTSAEVAVKTCNLVIQENYPTVASYCITDEYDAYLDMVDGASCCLDTATFCPAKLRSYPKKHSYLQPEIRSAVPSPIQNTLQNVLAAATKRNCNVTQMRELPVLDSAAFNVDCFKKYACNDEYWDTFRDNPIRLTTENVTQYVTKLKGPKAAALFANTHNLKPLQEIPMDQFVMDLKRDVKVTPGTKHTEERPKVQVIQAADPLATAYLCGIHRELVRRLNAVLLPNIHTLFDMSAEDFDAIIAEHFHHGDPVLETDIASFDKSEDDAIAISALMILEDLGVDQPLLDLIEAAFGNITSVHLPTGTRFKFGAMMKSGMFLTLFVNTLVNIMIASRVLRERLTTSACAASIGDDNIVHGVVSDTLMAERCATWLNMEVKIIDAVIGIKAPYFCGGFILVDQITGTACRVADPLKRLFKLGKPLPVDDTQDCDRRRALHDEAMRWNRIGITDELVKAVESRYEIILAGLIITSLSTLAESVKNFKSIRGSPITLYG</sequence>
<organismHost>
    <name type="scientific">Aedes</name>
    <dbReference type="NCBI Taxonomy" id="7158"/>
</organismHost>
<organismHost>
    <name type="scientific">Anopheles</name>
    <dbReference type="NCBI Taxonomy" id="7164"/>
</organismHost>
<organismHost>
    <name type="scientific">Culex tarsalis</name>
    <name type="common">Encephalitis mosquito</name>
    <dbReference type="NCBI Taxonomy" id="7177"/>
</organismHost>
<organismHost>
    <name type="scientific">Haemorhous mexicanus</name>
    <name type="common">House finch</name>
    <name type="synonym">Carpodacus mexicanus</name>
    <dbReference type="NCBI Taxonomy" id="30427"/>
</organismHost>
<organismHost>
    <name type="scientific">Homo sapiens</name>
    <name type="common">Human</name>
    <dbReference type="NCBI Taxonomy" id="9606"/>
</organismHost>
<organismHost>
    <name type="scientific">Lepus americanus</name>
    <name type="common">Snowshoe hare</name>
    <dbReference type="NCBI Taxonomy" id="48086"/>
</organismHost>
<organismHost>
    <name type="scientific">Lithobates pipiens</name>
    <name type="common">Northern leopard frog</name>
    <name type="synonym">Rana pipiens</name>
    <dbReference type="NCBI Taxonomy" id="8404"/>
</organismHost>
<organismHost>
    <name type="scientific">Passer domesticus</name>
    <name type="common">House sparrow</name>
    <name type="synonym">Fringilla domestica</name>
    <dbReference type="NCBI Taxonomy" id="48849"/>
</organismHost>
<organismHost>
    <name type="scientific">Thamnophis</name>
    <dbReference type="NCBI Taxonomy" id="34999"/>
</organismHost>
<organismHost>
    <name type="scientific">Urocitellus richardsonii</name>
    <name type="common">Richardson's ground squirrel</name>
    <name type="synonym">Spermophilus richardsonii</name>
    <dbReference type="NCBI Taxonomy" id="37591"/>
</organismHost>
<feature type="chain" id="PRO_0000308408" description="Polyprotein P1234">
    <location>
        <begin position="1"/>
        <end position="2467"/>
    </location>
</feature>
<feature type="chain" id="PRO_0000228801" description="Polyprotein P123'">
    <location>
        <begin position="1"/>
        <end position="1859"/>
    </location>
</feature>
<feature type="chain" id="PRO_0000228802" description="Polyprotein P123">
    <location>
        <begin position="1"/>
        <end position="1852"/>
    </location>
</feature>
<feature type="chain" id="PRO_0000228803" description="mRNA-capping enzyme nsP1">
    <location>
        <begin position="1"/>
        <end position="533"/>
    </location>
</feature>
<feature type="chain" id="PRO_0000228804" description="Protease nsP2">
    <location>
        <begin position="534"/>
        <end position="1327"/>
    </location>
</feature>
<feature type="chain" id="PRO_0000228805" description="Non-structural protein 3'">
    <location>
        <begin position="1328"/>
        <end position="1852"/>
    </location>
</feature>
<feature type="chain" id="PRO_0000228806" description="Non-structural protein 3">
    <location>
        <begin position="1348"/>
        <end position="1859"/>
    </location>
</feature>
<feature type="chain" id="PRO_0000228807" description="RNA-directed RNA polymerase nsP4">
    <location>
        <begin position="1860"/>
        <end position="2467"/>
    </location>
</feature>
<feature type="domain" description="Alphavirus-like MT" evidence="12">
    <location>
        <begin position="28"/>
        <end position="257"/>
    </location>
</feature>
<feature type="domain" description="(+)RNA virus helicase ATP-binding" evidence="11">
    <location>
        <begin position="688"/>
        <end position="839"/>
    </location>
</feature>
<feature type="domain" description="(+)RNA virus helicase C-terminal" evidence="11">
    <location>
        <begin position="840"/>
        <end position="988"/>
    </location>
</feature>
<feature type="domain" description="Peptidase C9" evidence="10">
    <location>
        <begin position="1001"/>
        <end position="1320"/>
    </location>
</feature>
<feature type="domain" description="Macro" evidence="8">
    <location>
        <begin position="1328"/>
        <end position="1486"/>
    </location>
</feature>
<feature type="domain" description="RdRp catalytic" evidence="9">
    <location>
        <begin position="2224"/>
        <end position="2339"/>
    </location>
</feature>
<feature type="region of interest" description="NsP1 membrane-binding" evidence="3">
    <location>
        <begin position="242"/>
        <end position="261"/>
    </location>
</feature>
<feature type="region of interest" description="Nucleolus localization signal" evidence="3">
    <location>
        <begin position="1002"/>
        <end position="1021"/>
    </location>
</feature>
<feature type="region of interest" description="Disordered" evidence="13">
    <location>
        <begin position="1798"/>
        <end position="1833"/>
    </location>
</feature>
<feature type="region of interest" description="Binding to host FXR family members" evidence="6">
    <location>
        <begin position="1831"/>
        <end position="1847"/>
    </location>
</feature>
<feature type="short sequence motif" description="Nuclear export signal" evidence="4">
    <location>
        <begin position="1054"/>
        <end position="1063"/>
    </location>
</feature>
<feature type="short sequence motif" description="Nuclear localization signal" evidence="4">
    <location>
        <begin position="1177"/>
        <end position="1181"/>
    </location>
</feature>
<feature type="active site" description="For cysteine protease nsP2 activity" evidence="10">
    <location>
        <position position="1010"/>
    </location>
</feature>
<feature type="active site" description="For cysteine protease nsP2 activity" evidence="10">
    <location>
        <position position="1079"/>
    </location>
</feature>
<feature type="binding site" evidence="11">
    <location>
        <begin position="719"/>
        <end position="726"/>
    </location>
    <ligand>
        <name>a ribonucleoside 5'-triphosphate</name>
        <dbReference type="ChEBI" id="CHEBI:61557"/>
    </ligand>
</feature>
<feature type="binding site" evidence="5">
    <location>
        <position position="1337"/>
    </location>
    <ligand>
        <name>ADP-D-ribose</name>
        <dbReference type="ChEBI" id="CHEBI:57967"/>
    </ligand>
</feature>
<feature type="binding site" evidence="7">
    <location>
        <position position="1351"/>
    </location>
    <ligand>
        <name>ADP-D-ribose</name>
        <dbReference type="ChEBI" id="CHEBI:57967"/>
    </ligand>
</feature>
<feature type="binding site" evidence="7">
    <location>
        <position position="1359"/>
    </location>
    <ligand>
        <name>ADP-D-ribose</name>
        <dbReference type="ChEBI" id="CHEBI:57967"/>
    </ligand>
</feature>
<feature type="binding site" evidence="5">
    <location>
        <position position="1438"/>
    </location>
    <ligand>
        <name>ADP-D-ribose</name>
        <dbReference type="ChEBI" id="CHEBI:57967"/>
    </ligand>
</feature>
<feature type="binding site" evidence="5">
    <location>
        <position position="1439"/>
    </location>
    <ligand>
        <name>ADP-D-ribose</name>
        <dbReference type="ChEBI" id="CHEBI:57967"/>
    </ligand>
</feature>
<feature type="binding site" evidence="7">
    <location>
        <position position="1440"/>
    </location>
    <ligand>
        <name>ADP-D-ribose</name>
        <dbReference type="ChEBI" id="CHEBI:57967"/>
    </ligand>
</feature>
<feature type="binding site" evidence="2">
    <location>
        <position position="1588"/>
    </location>
    <ligand>
        <name>Zn(2+)</name>
        <dbReference type="ChEBI" id="CHEBI:29105"/>
    </ligand>
</feature>
<feature type="binding site" evidence="2">
    <location>
        <position position="1590"/>
    </location>
    <ligand>
        <name>Zn(2+)</name>
        <dbReference type="ChEBI" id="CHEBI:29105"/>
    </ligand>
</feature>
<feature type="binding site" evidence="2">
    <location>
        <position position="1613"/>
    </location>
    <ligand>
        <name>Zn(2+)</name>
        <dbReference type="ChEBI" id="CHEBI:29105"/>
    </ligand>
</feature>
<feature type="binding site" evidence="2">
    <location>
        <position position="1631"/>
    </location>
    <ligand>
        <name>Zn(2+)</name>
        <dbReference type="ChEBI" id="CHEBI:29105"/>
    </ligand>
</feature>
<feature type="site" description="Involved in the phosphoramide link with 7-methyl-GMP" evidence="4">
    <location>
        <position position="37"/>
    </location>
</feature>
<feature type="site" description="Cleavage; by protease nsP2" evidence="2">
    <location>
        <begin position="533"/>
        <end position="534"/>
    </location>
</feature>
<feature type="site" description="Cleavage; by protease nsP2" evidence="2">
    <location>
        <begin position="1327"/>
        <end position="1328"/>
    </location>
</feature>
<feature type="site" description="Cleavage; by protease nsP2" evidence="7">
    <location>
        <begin position="1859"/>
        <end position="1860"/>
    </location>
</feature>
<feature type="lipid moiety-binding region" description="S-palmitoyl cysteine; by host" evidence="7">
    <location>
        <position position="417"/>
    </location>
</feature>
<feature type="sequence variant" description="In strain: BFS1703.">
    <original>S</original>
    <variation>N</variation>
    <location>
        <position position="2461"/>
    </location>
</feature>
<proteinExistence type="inferred from homology"/>
<name>POLN_WEEV</name>